<reference key="1">
    <citation type="submission" date="2006-03" db="EMBL/GenBank/DDBJ databases">
        <title>Complete sequence of chromosome of Nitrobacter hamburgensis X14.</title>
        <authorList>
            <consortium name="US DOE Joint Genome Institute"/>
            <person name="Copeland A."/>
            <person name="Lucas S."/>
            <person name="Lapidus A."/>
            <person name="Barry K."/>
            <person name="Detter J.C."/>
            <person name="Glavina del Rio T."/>
            <person name="Hammon N."/>
            <person name="Israni S."/>
            <person name="Dalin E."/>
            <person name="Tice H."/>
            <person name="Pitluck S."/>
            <person name="Chain P."/>
            <person name="Malfatti S."/>
            <person name="Shin M."/>
            <person name="Vergez L."/>
            <person name="Schmutz J."/>
            <person name="Larimer F."/>
            <person name="Land M."/>
            <person name="Hauser L."/>
            <person name="Kyrpides N."/>
            <person name="Ivanova N."/>
            <person name="Ward B."/>
            <person name="Arp D."/>
            <person name="Klotz M."/>
            <person name="Stein L."/>
            <person name="O'Mullan G."/>
            <person name="Starkenburg S."/>
            <person name="Sayavedra L."/>
            <person name="Poret-Peterson A.T."/>
            <person name="Gentry M.E."/>
            <person name="Bruce D."/>
            <person name="Richardson P."/>
        </authorList>
    </citation>
    <scope>NUCLEOTIDE SEQUENCE [LARGE SCALE GENOMIC DNA]</scope>
    <source>
        <strain>DSM 10229 / NCIMB 13809 / X14</strain>
    </source>
</reference>
<sequence>MADGTAANSSRRIFLIATEESGDRLGSSLMKVLRRRLDDAVRFEGVGGRSMAREGLVSLFPIEDLSIMGFAAVVKQLPMILRRIRETADAVIAAEPDMLVIIDSPDFTHRVARRVRARRPALPIVDYVSPSVWAWRPGRARAMRRYVDHVLALLPFEPEEYRRLAGPPCTYVGHPLIEQVGMLRPDAQERQRRDAPPPALLVLPGSRRSEIDHHMAVFGETLRTLQLDAGEMDVVLLTMPHLIEKVKAAVASWPLQPRIVVGEQGKQAAFRVARAALTKSGTVTLELALAGVPMVTAYRGGAVEAWIAQRVIRTSSVILANLVIGENVIPEFLQENCTPENLAPALREILTDSPLRRRQLKAFAKLDAIMATGQHSPSERAADIVLETMHASRGPE</sequence>
<keyword id="KW-0328">Glycosyltransferase</keyword>
<keyword id="KW-0441">Lipid A biosynthesis</keyword>
<keyword id="KW-0444">Lipid biosynthesis</keyword>
<keyword id="KW-0443">Lipid metabolism</keyword>
<keyword id="KW-1185">Reference proteome</keyword>
<keyword id="KW-0808">Transferase</keyword>
<feature type="chain" id="PRO_0000255201" description="Lipid-A-disaccharide synthase">
    <location>
        <begin position="1"/>
        <end position="396"/>
    </location>
</feature>
<dbReference type="EC" id="2.4.1.182" evidence="1"/>
<dbReference type="EMBL" id="CP000319">
    <property type="protein sequence ID" value="ABE62523.1"/>
    <property type="molecule type" value="Genomic_DNA"/>
</dbReference>
<dbReference type="RefSeq" id="WP_011510205.1">
    <property type="nucleotide sequence ID" value="NC_007964.1"/>
</dbReference>
<dbReference type="SMR" id="Q1QMM4"/>
<dbReference type="STRING" id="323097.Nham_1707"/>
<dbReference type="CAZy" id="GT19">
    <property type="family name" value="Glycosyltransferase Family 19"/>
</dbReference>
<dbReference type="KEGG" id="nha:Nham_1707"/>
<dbReference type="eggNOG" id="COG0763">
    <property type="taxonomic scope" value="Bacteria"/>
</dbReference>
<dbReference type="HOGENOM" id="CLU_036577_3_0_5"/>
<dbReference type="OrthoDB" id="9801642at2"/>
<dbReference type="UniPathway" id="UPA00973"/>
<dbReference type="Proteomes" id="UP000001953">
    <property type="component" value="Chromosome"/>
</dbReference>
<dbReference type="GO" id="GO:0016020">
    <property type="term" value="C:membrane"/>
    <property type="evidence" value="ECO:0007669"/>
    <property type="project" value="GOC"/>
</dbReference>
<dbReference type="GO" id="GO:0008915">
    <property type="term" value="F:lipid-A-disaccharide synthase activity"/>
    <property type="evidence" value="ECO:0007669"/>
    <property type="project" value="UniProtKB-UniRule"/>
</dbReference>
<dbReference type="GO" id="GO:0005543">
    <property type="term" value="F:phospholipid binding"/>
    <property type="evidence" value="ECO:0007669"/>
    <property type="project" value="TreeGrafter"/>
</dbReference>
<dbReference type="GO" id="GO:0009245">
    <property type="term" value="P:lipid A biosynthetic process"/>
    <property type="evidence" value="ECO:0007669"/>
    <property type="project" value="UniProtKB-UniRule"/>
</dbReference>
<dbReference type="HAMAP" id="MF_00392">
    <property type="entry name" value="LpxB"/>
    <property type="match status" value="1"/>
</dbReference>
<dbReference type="InterPro" id="IPR003835">
    <property type="entry name" value="Glyco_trans_19"/>
</dbReference>
<dbReference type="NCBIfam" id="TIGR00215">
    <property type="entry name" value="lpxB"/>
    <property type="match status" value="1"/>
</dbReference>
<dbReference type="PANTHER" id="PTHR30372">
    <property type="entry name" value="LIPID-A-DISACCHARIDE SYNTHASE"/>
    <property type="match status" value="1"/>
</dbReference>
<dbReference type="PANTHER" id="PTHR30372:SF4">
    <property type="entry name" value="LIPID-A-DISACCHARIDE SYNTHASE, MITOCHONDRIAL-RELATED"/>
    <property type="match status" value="1"/>
</dbReference>
<dbReference type="Pfam" id="PF02684">
    <property type="entry name" value="LpxB"/>
    <property type="match status" value="1"/>
</dbReference>
<dbReference type="SUPFAM" id="SSF53756">
    <property type="entry name" value="UDP-Glycosyltransferase/glycogen phosphorylase"/>
    <property type="match status" value="1"/>
</dbReference>
<gene>
    <name evidence="1" type="primary">lpxB</name>
    <name type="ordered locus">Nham_1707</name>
</gene>
<comment type="function">
    <text evidence="1">Condensation of UDP-2,3-diacylglucosamine and 2,3-diacylglucosamine-1-phosphate to form lipid A disaccharide, a precursor of lipid A, a phosphorylated glycolipid that anchors the lipopolysaccharide to the outer membrane of the cell.</text>
</comment>
<comment type="catalytic activity">
    <reaction evidence="1">
        <text>a lipid X + a UDP-2-N,3-O-bis[(3R)-3-hydroxyacyl]-alpha-D-glucosamine = a lipid A disaccharide + UDP + H(+)</text>
        <dbReference type="Rhea" id="RHEA:67828"/>
        <dbReference type="ChEBI" id="CHEBI:15378"/>
        <dbReference type="ChEBI" id="CHEBI:58223"/>
        <dbReference type="ChEBI" id="CHEBI:137748"/>
        <dbReference type="ChEBI" id="CHEBI:176338"/>
        <dbReference type="ChEBI" id="CHEBI:176343"/>
        <dbReference type="EC" id="2.4.1.182"/>
    </reaction>
</comment>
<comment type="pathway">
    <text evidence="1">Bacterial outer membrane biogenesis; LPS lipid A biosynthesis.</text>
</comment>
<comment type="similarity">
    <text evidence="1">Belongs to the LpxB family.</text>
</comment>
<name>LPXB_NITHX</name>
<proteinExistence type="inferred from homology"/>
<accession>Q1QMM4</accession>
<protein>
    <recommendedName>
        <fullName evidence="1">Lipid-A-disaccharide synthase</fullName>
        <ecNumber evidence="1">2.4.1.182</ecNumber>
    </recommendedName>
</protein>
<evidence type="ECO:0000255" key="1">
    <source>
        <dbReference type="HAMAP-Rule" id="MF_00392"/>
    </source>
</evidence>
<organism>
    <name type="scientific">Nitrobacter hamburgensis (strain DSM 10229 / NCIMB 13809 / X14)</name>
    <dbReference type="NCBI Taxonomy" id="323097"/>
    <lineage>
        <taxon>Bacteria</taxon>
        <taxon>Pseudomonadati</taxon>
        <taxon>Pseudomonadota</taxon>
        <taxon>Alphaproteobacteria</taxon>
        <taxon>Hyphomicrobiales</taxon>
        <taxon>Nitrobacteraceae</taxon>
        <taxon>Nitrobacter</taxon>
    </lineage>
</organism>